<reference key="1">
    <citation type="journal article" date="2008" name="J. Bacteriol.">
        <title>The pangenome structure of Escherichia coli: comparative genomic analysis of E. coli commensal and pathogenic isolates.</title>
        <authorList>
            <person name="Rasko D.A."/>
            <person name="Rosovitz M.J."/>
            <person name="Myers G.S.A."/>
            <person name="Mongodin E.F."/>
            <person name="Fricke W.F."/>
            <person name="Gajer P."/>
            <person name="Crabtree J."/>
            <person name="Sebaihia M."/>
            <person name="Thomson N.R."/>
            <person name="Chaudhuri R."/>
            <person name="Henderson I.R."/>
            <person name="Sperandio V."/>
            <person name="Ravel J."/>
        </authorList>
    </citation>
    <scope>NUCLEOTIDE SEQUENCE [LARGE SCALE GENOMIC DNA]</scope>
    <source>
        <strain>HS</strain>
    </source>
</reference>
<dbReference type="EMBL" id="CP000802">
    <property type="protein sequence ID" value="ABV07710.1"/>
    <property type="molecule type" value="Genomic_DNA"/>
</dbReference>
<dbReference type="RefSeq" id="WP_001238914.1">
    <property type="nucleotide sequence ID" value="NC_009800.1"/>
</dbReference>
<dbReference type="EMDB" id="EMD-8826"/>
<dbReference type="EMDB" id="EMD-8829"/>
<dbReference type="SMR" id="A8A5A6"/>
<dbReference type="KEGG" id="ecx:EcHS_A3495"/>
<dbReference type="HOGENOM" id="CLU_055188_4_2_6"/>
<dbReference type="GO" id="GO:0022625">
    <property type="term" value="C:cytosolic large ribosomal subunit"/>
    <property type="evidence" value="ECO:0007669"/>
    <property type="project" value="TreeGrafter"/>
</dbReference>
<dbReference type="GO" id="GO:0019843">
    <property type="term" value="F:rRNA binding"/>
    <property type="evidence" value="ECO:0007669"/>
    <property type="project" value="UniProtKB-UniRule"/>
</dbReference>
<dbReference type="GO" id="GO:0003735">
    <property type="term" value="F:structural constituent of ribosome"/>
    <property type="evidence" value="ECO:0007669"/>
    <property type="project" value="InterPro"/>
</dbReference>
<dbReference type="GO" id="GO:0006412">
    <property type="term" value="P:translation"/>
    <property type="evidence" value="ECO:0007669"/>
    <property type="project" value="UniProtKB-UniRule"/>
</dbReference>
<dbReference type="FunFam" id="3.100.10.10:FF:000003">
    <property type="entry name" value="50S ribosomal protein L15"/>
    <property type="match status" value="1"/>
</dbReference>
<dbReference type="Gene3D" id="3.100.10.10">
    <property type="match status" value="1"/>
</dbReference>
<dbReference type="HAMAP" id="MF_01341">
    <property type="entry name" value="Ribosomal_uL15"/>
    <property type="match status" value="1"/>
</dbReference>
<dbReference type="InterPro" id="IPR030878">
    <property type="entry name" value="Ribosomal_uL15"/>
</dbReference>
<dbReference type="InterPro" id="IPR021131">
    <property type="entry name" value="Ribosomal_uL15/eL18"/>
</dbReference>
<dbReference type="InterPro" id="IPR036227">
    <property type="entry name" value="Ribosomal_uL15/eL18_sf"/>
</dbReference>
<dbReference type="InterPro" id="IPR005749">
    <property type="entry name" value="Ribosomal_uL15_bac-type"/>
</dbReference>
<dbReference type="InterPro" id="IPR001196">
    <property type="entry name" value="Ribosomal_uL15_CS"/>
</dbReference>
<dbReference type="NCBIfam" id="TIGR01071">
    <property type="entry name" value="rplO_bact"/>
    <property type="match status" value="1"/>
</dbReference>
<dbReference type="PANTHER" id="PTHR12934">
    <property type="entry name" value="50S RIBOSOMAL PROTEIN L15"/>
    <property type="match status" value="1"/>
</dbReference>
<dbReference type="PANTHER" id="PTHR12934:SF11">
    <property type="entry name" value="LARGE RIBOSOMAL SUBUNIT PROTEIN UL15M"/>
    <property type="match status" value="1"/>
</dbReference>
<dbReference type="Pfam" id="PF00828">
    <property type="entry name" value="Ribosomal_L27A"/>
    <property type="match status" value="1"/>
</dbReference>
<dbReference type="SUPFAM" id="SSF52080">
    <property type="entry name" value="Ribosomal proteins L15p and L18e"/>
    <property type="match status" value="1"/>
</dbReference>
<dbReference type="PROSITE" id="PS00475">
    <property type="entry name" value="RIBOSOMAL_L15"/>
    <property type="match status" value="1"/>
</dbReference>
<organism>
    <name type="scientific">Escherichia coli O9:H4 (strain HS)</name>
    <dbReference type="NCBI Taxonomy" id="331112"/>
    <lineage>
        <taxon>Bacteria</taxon>
        <taxon>Pseudomonadati</taxon>
        <taxon>Pseudomonadota</taxon>
        <taxon>Gammaproteobacteria</taxon>
        <taxon>Enterobacterales</taxon>
        <taxon>Enterobacteriaceae</taxon>
        <taxon>Escherichia</taxon>
    </lineage>
</organism>
<keyword id="KW-0687">Ribonucleoprotein</keyword>
<keyword id="KW-0689">Ribosomal protein</keyword>
<keyword id="KW-0694">RNA-binding</keyword>
<keyword id="KW-0699">rRNA-binding</keyword>
<evidence type="ECO:0000255" key="1">
    <source>
        <dbReference type="HAMAP-Rule" id="MF_01341"/>
    </source>
</evidence>
<evidence type="ECO:0000256" key="2">
    <source>
        <dbReference type="SAM" id="MobiDB-lite"/>
    </source>
</evidence>
<evidence type="ECO:0000305" key="3"/>
<proteinExistence type="inferred from homology"/>
<name>RL15_ECOHS</name>
<comment type="function">
    <text evidence="1">Binds to the 23S rRNA.</text>
</comment>
<comment type="subunit">
    <text evidence="1">Part of the 50S ribosomal subunit.</text>
</comment>
<comment type="similarity">
    <text evidence="1">Belongs to the universal ribosomal protein uL15 family.</text>
</comment>
<gene>
    <name evidence="1" type="primary">rplO</name>
    <name type="ordered locus">EcHS_A3495</name>
</gene>
<feature type="chain" id="PRO_1000067663" description="Large ribosomal subunit protein uL15">
    <location>
        <begin position="1"/>
        <end position="144"/>
    </location>
</feature>
<feature type="region of interest" description="Disordered" evidence="2">
    <location>
        <begin position="1"/>
        <end position="54"/>
    </location>
</feature>
<feature type="compositionally biased region" description="Gly residues" evidence="2">
    <location>
        <begin position="21"/>
        <end position="31"/>
    </location>
</feature>
<sequence>MRLNTLSPAEGSKKAGKRLGRGIGSGLGKTGGRGHKGQKSRSGGGVRRGFEGGQMPLYRRLPKFGFTSRKAAITAEIRLSDLAKVEGGVVDLNTLKAANIIGIQIEFAKVILAGEVTTPVTVRGLRVTKGARAAIEAAGGKIEE</sequence>
<protein>
    <recommendedName>
        <fullName evidence="1">Large ribosomal subunit protein uL15</fullName>
    </recommendedName>
    <alternativeName>
        <fullName evidence="3">50S ribosomal protein L15</fullName>
    </alternativeName>
</protein>
<accession>A8A5A6</accession>